<name>PERC_ECO11</name>
<feature type="chain" id="PRO_0000372765" description="Protein PerC">
    <location>
        <begin position="1"/>
        <end position="89"/>
    </location>
</feature>
<comment type="function">
    <text>Transcriptional activator of eaeA/bfpA expression in enteropathogenic E.coli.</text>
</comment>
<sequence length="89" mass="10585">MEIRDKKAKYLEEKGFYRRAADRWAEIMVLLSSDAERKLAAQKRAFCINKSLRNNLQADNYSDIKQGVYKAYKKMGLVNEKIFRNYKEN</sequence>
<gene>
    <name type="primary">perC</name>
    <name type="synonym">bfpW</name>
</gene>
<reference key="1">
    <citation type="journal article" date="1996" name="Mol. Microbiol.">
        <title>Cloning and characterization of bfpTVW, genes required for the transcriptional activation of bfpA in enteropathogenic Escherichia coli.</title>
        <authorList>
            <person name="Tobe T."/>
            <person name="Schoolnik G.K."/>
            <person name="Sohel I."/>
            <person name="Bustamante V.H."/>
            <person name="Puente J.L."/>
        </authorList>
    </citation>
    <scope>NUCLEOTIDE SEQUENCE [GENOMIC DNA]</scope>
    <source>
        <strain>O111:H- / B171 / EPEC</strain>
    </source>
</reference>
<keyword id="KW-0010">Activator</keyword>
<keyword id="KW-0238">DNA-binding</keyword>
<keyword id="KW-0804">Transcription</keyword>
<keyword id="KW-0805">Transcription regulation</keyword>
<accession>P0C962</accession>
<accession>P43475</accession>
<organism>
    <name type="scientific">Escherichia coli O111:H-</name>
    <dbReference type="NCBI Taxonomy" id="168927"/>
    <lineage>
        <taxon>Bacteria</taxon>
        <taxon>Pseudomonadati</taxon>
        <taxon>Pseudomonadota</taxon>
        <taxon>Gammaproteobacteria</taxon>
        <taxon>Enterobacterales</taxon>
        <taxon>Enterobacteriaceae</taxon>
        <taxon>Escherichia</taxon>
    </lineage>
</organism>
<proteinExistence type="predicted"/>
<protein>
    <recommendedName>
        <fullName>Protein PerC</fullName>
    </recommendedName>
    <alternativeName>
        <fullName>Protein BfpW</fullName>
    </alternativeName>
</protein>
<dbReference type="EMBL" id="L42638">
    <property type="protein sequence ID" value="AAB36832.1"/>
    <property type="molecule type" value="Genomic_DNA"/>
</dbReference>
<dbReference type="RefSeq" id="YP_001965399.1">
    <property type="nucleotide sequence ID" value="NC_010862.1"/>
</dbReference>
<dbReference type="SMR" id="P0C962"/>
<dbReference type="GO" id="GO:0003677">
    <property type="term" value="F:DNA binding"/>
    <property type="evidence" value="ECO:0007669"/>
    <property type="project" value="UniProtKB-KW"/>
</dbReference>
<dbReference type="InterPro" id="IPR024684">
    <property type="entry name" value="Tscrpt_act_PerC/SfV_Orf40"/>
</dbReference>
<dbReference type="Pfam" id="PF06069">
    <property type="entry name" value="PerC"/>
    <property type="match status" value="1"/>
</dbReference>